<reference key="1">
    <citation type="journal article" date="1984" name="J. Bacteriol.">
        <title>Structural gene for the phosphate-repressible phosphate-binding protein of Escherichia coli has its own promoter: complete nucleotide sequence of the phoS gene.</title>
        <authorList>
            <person name="Surin B.P."/>
            <person name="Jans D.A."/>
            <person name="Fimmel A.L."/>
            <person name="Shaw D.C."/>
            <person name="Cox G.B."/>
            <person name="Rosenberg H."/>
        </authorList>
    </citation>
    <scope>NUCLEOTIDE SEQUENCE [GENOMIC DNA]</scope>
    <scope>PARTIAL PROTEIN SEQUENCE</scope>
</reference>
<reference key="2">
    <citation type="journal article" date="1984" name="J. Bacteriol.">
        <title>Nucleotide sequence of the phoS gene, the structural gene for the phosphate-binding protein of Escherichia coli.</title>
        <authorList>
            <person name="Magota K."/>
            <person name="Otsuji N."/>
            <person name="Miki T."/>
            <person name="Horiuchi T."/>
            <person name="Tsunasawa S."/>
            <person name="Kondo J."/>
            <person name="Sakiyama F."/>
            <person name="Amemura M."/>
            <person name="Morita T."/>
            <person name="Shinagawa H."/>
            <person name="Nakata A."/>
        </authorList>
    </citation>
    <scope>NUCLEOTIDE SEQUENCE [GENOMIC DNA]</scope>
    <scope>PARTIAL PROTEIN SEQUENCE</scope>
</reference>
<reference key="3">
    <citation type="journal article" date="1993" name="Genomics">
        <title>DNA sequence and analysis of 136 kilobases of the Escherichia coli genome: organizational symmetry around the origin of replication.</title>
        <authorList>
            <person name="Burland V.D."/>
            <person name="Plunkett G. III"/>
            <person name="Daniels D.L."/>
            <person name="Blattner F.R."/>
        </authorList>
    </citation>
    <scope>NUCLEOTIDE SEQUENCE [LARGE SCALE GENOMIC DNA]</scope>
    <source>
        <strain>K12 / MG1655 / ATCC 47076</strain>
    </source>
</reference>
<reference key="4">
    <citation type="journal article" date="1997" name="Science">
        <title>The complete genome sequence of Escherichia coli K-12.</title>
        <authorList>
            <person name="Blattner F.R."/>
            <person name="Plunkett G. III"/>
            <person name="Bloch C.A."/>
            <person name="Perna N.T."/>
            <person name="Burland V."/>
            <person name="Riley M."/>
            <person name="Collado-Vides J."/>
            <person name="Glasner J.D."/>
            <person name="Rode C.K."/>
            <person name="Mayhew G.F."/>
            <person name="Gregor J."/>
            <person name="Davis N.W."/>
            <person name="Kirkpatrick H.A."/>
            <person name="Goeden M.A."/>
            <person name="Rose D.J."/>
            <person name="Mau B."/>
            <person name="Shao Y."/>
        </authorList>
    </citation>
    <scope>NUCLEOTIDE SEQUENCE [LARGE SCALE GENOMIC DNA]</scope>
    <source>
        <strain>K12 / MG1655 / ATCC 47076</strain>
    </source>
</reference>
<reference key="5">
    <citation type="journal article" date="2006" name="Mol. Syst. Biol.">
        <title>Highly accurate genome sequences of Escherichia coli K-12 strains MG1655 and W3110.</title>
        <authorList>
            <person name="Hayashi K."/>
            <person name="Morooka N."/>
            <person name="Yamamoto Y."/>
            <person name="Fujita K."/>
            <person name="Isono K."/>
            <person name="Choi S."/>
            <person name="Ohtsubo E."/>
            <person name="Baba T."/>
            <person name="Wanner B.L."/>
            <person name="Mori H."/>
            <person name="Horiuchi T."/>
        </authorList>
    </citation>
    <scope>NUCLEOTIDE SEQUENCE [LARGE SCALE GENOMIC DNA]</scope>
    <source>
        <strain>K12 / W3110 / ATCC 27325 / DSM 5911</strain>
    </source>
</reference>
<reference key="6">
    <citation type="journal article" date="1997" name="Electrophoresis">
        <title>Comparing the predicted and observed properties of proteins encoded in the genome of Escherichia coli K-12.</title>
        <authorList>
            <person name="Link A.J."/>
            <person name="Robison K."/>
            <person name="Church G.M."/>
        </authorList>
    </citation>
    <scope>PROTEIN SEQUENCE OF 26-37</scope>
    <source>
        <strain>K12 / EMG2</strain>
    </source>
</reference>
<reference key="7">
    <citation type="journal article" date="1990" name="Nature">
        <title>High specificity of a phosphate transport protein determined by hydrogen bonds.</title>
        <authorList>
            <person name="Luecke H."/>
            <person name="Quiocho F.A."/>
        </authorList>
    </citation>
    <scope>X-RAY CRYSTALLOGRAPHY (1.7 ANGSTROMS)</scope>
</reference>
<reference key="8">
    <citation type="journal article" date="1997" name="Nat. Struct. Biol.">
        <title>A low energy short hydrogen bond in very high resolution structures of protein receptor-phosphate complexes.</title>
        <authorList>
            <person name="Wang Z."/>
            <person name="Luecke H."/>
            <person name="Yao N."/>
            <person name="Quiocho F.A."/>
        </authorList>
    </citation>
    <scope>X-RAY CRYSTALLOGRAPHY (1.89 ANGSTROMS) OF MUTANT ASN-81</scope>
</reference>
<reference key="9">
    <citation type="journal article" date="1998" name="Biochemistry">
        <title>Crystal structure of phosphate binding protein labeled with a coumarin fluorophore, a probe for inorganic phosphate.</title>
        <authorList>
            <person name="Hirshberg M."/>
            <person name="Henrick K."/>
            <person name="Haire L.L."/>
            <person name="Vasisht N."/>
            <person name="Brune M."/>
            <person name="Corrie J.E."/>
            <person name="Webb M.R."/>
        </authorList>
    </citation>
    <scope>X-RAY CRYSTALLOGRAPHY (1.6 ANGSTROMS)</scope>
</reference>
<organism>
    <name type="scientific">Escherichia coli (strain K12)</name>
    <dbReference type="NCBI Taxonomy" id="83333"/>
    <lineage>
        <taxon>Bacteria</taxon>
        <taxon>Pseudomonadati</taxon>
        <taxon>Pseudomonadota</taxon>
        <taxon>Gammaproteobacteria</taxon>
        <taxon>Enterobacterales</taxon>
        <taxon>Enterobacteriaceae</taxon>
        <taxon>Escherichia</taxon>
    </lineage>
</organism>
<sequence>MKVMRTTVATVVAATLSMSAFSVFAEASLTGAGATFPAPVYAKWADTYQKETGNKVNYQGIGSSGGVKQIIANTVDFGASDAPLSDEKLAQEGLFQFPTVIGGVVLAVNIPGLKSGELVLDGKTLGDIYLGKIKKWDDEAIAKLNPGLKLPSQNIAVVRRADGSGTSFVFTSYLAKVNEEWKNNVGTGSTVKWPIGLGGKGNDGIAAFVQRLPGAIGYVEYAYAKQNNLAYTKLISADGKPVSPTEENFANAAKGADWSKTFAQDLTNQKGEDAWPITSTTFILIHKDQKKPEQGTEVLKFFDWAYKTGAKQANDLDYASLPDSVVEQVRAAWKTNIKDSSGKPLY</sequence>
<gene>
    <name type="primary">pstS</name>
    <name type="synonym">phoS</name>
    <name type="ordered locus">b3728</name>
    <name type="ordered locus">JW3706</name>
</gene>
<accession>P0AG82</accession>
<accession>P06128</accession>
<accession>P76744</accession>
<accession>Q2M846</accession>
<evidence type="ECO:0000250" key="1">
    <source>
        <dbReference type="UniProtKB" id="P9WGT7"/>
    </source>
</evidence>
<evidence type="ECO:0000269" key="2">
    <source>
    </source>
</evidence>
<evidence type="ECO:0000305" key="3"/>
<evidence type="ECO:0007829" key="4">
    <source>
        <dbReference type="PDB" id="1A40"/>
    </source>
</evidence>
<evidence type="ECO:0007829" key="5">
    <source>
        <dbReference type="PDB" id="1A54"/>
    </source>
</evidence>
<evidence type="ECO:0007829" key="6">
    <source>
        <dbReference type="PDB" id="1A55"/>
    </source>
</evidence>
<evidence type="ECO:0007829" key="7">
    <source>
        <dbReference type="PDB" id="1IXH"/>
    </source>
</evidence>
<evidence type="ECO:0007829" key="8">
    <source>
        <dbReference type="PDB" id="1OIB"/>
    </source>
</evidence>
<keyword id="KW-0002">3D-structure</keyword>
<keyword id="KW-0903">Direct protein sequencing</keyword>
<keyword id="KW-0574">Periplasm</keyword>
<keyword id="KW-0592">Phosphate transport</keyword>
<keyword id="KW-1185">Reference proteome</keyword>
<keyword id="KW-0732">Signal</keyword>
<keyword id="KW-0346">Stress response</keyword>
<keyword id="KW-0813">Transport</keyword>
<feature type="signal peptide" evidence="2">
    <location>
        <begin position="1"/>
        <end position="25"/>
    </location>
</feature>
<feature type="chain" id="PRO_0000031848" description="Phosphate-binding protein PstS">
    <location>
        <begin position="26"/>
        <end position="346"/>
    </location>
</feature>
<feature type="binding site" evidence="1">
    <location>
        <begin position="34"/>
        <end position="36"/>
    </location>
    <ligand>
        <name>phosphate</name>
        <dbReference type="ChEBI" id="CHEBI:43474"/>
    </ligand>
</feature>
<feature type="binding site" evidence="1">
    <location>
        <position position="63"/>
    </location>
    <ligand>
        <name>phosphate</name>
        <dbReference type="ChEBI" id="CHEBI:43474"/>
    </ligand>
</feature>
<feature type="binding site" evidence="1">
    <location>
        <position position="81"/>
    </location>
    <ligand>
        <name>phosphate</name>
        <dbReference type="ChEBI" id="CHEBI:43474"/>
    </ligand>
</feature>
<feature type="binding site" evidence="1">
    <location>
        <begin position="164"/>
        <end position="166"/>
    </location>
    <ligand>
        <name>phosphate</name>
        <dbReference type="ChEBI" id="CHEBI:43474"/>
    </ligand>
</feature>
<feature type="strand" evidence="7">
    <location>
        <begin position="28"/>
        <end position="33"/>
    </location>
</feature>
<feature type="strand" evidence="6">
    <location>
        <begin position="35"/>
        <end position="37"/>
    </location>
</feature>
<feature type="helix" evidence="7">
    <location>
        <begin position="38"/>
        <end position="52"/>
    </location>
</feature>
<feature type="strand" evidence="7">
    <location>
        <begin position="55"/>
        <end position="60"/>
    </location>
</feature>
<feature type="helix" evidence="7">
    <location>
        <begin position="63"/>
        <end position="71"/>
    </location>
</feature>
<feature type="strand" evidence="7">
    <location>
        <begin position="75"/>
        <end position="82"/>
    </location>
</feature>
<feature type="helix" evidence="7">
    <location>
        <begin position="86"/>
        <end position="92"/>
    </location>
</feature>
<feature type="strand" evidence="7">
    <location>
        <begin position="94"/>
        <end position="108"/>
    </location>
</feature>
<feature type="turn" evidence="5">
    <location>
        <begin position="115"/>
        <end position="117"/>
    </location>
</feature>
<feature type="helix" evidence="7">
    <location>
        <begin position="122"/>
        <end position="129"/>
    </location>
</feature>
<feature type="helix" evidence="7">
    <location>
        <begin position="139"/>
        <end position="144"/>
    </location>
</feature>
<feature type="strand" evidence="7">
    <location>
        <begin position="156"/>
        <end position="162"/>
    </location>
</feature>
<feature type="helix" evidence="7">
    <location>
        <begin position="165"/>
        <end position="177"/>
    </location>
</feature>
<feature type="helix" evidence="7">
    <location>
        <begin position="179"/>
        <end position="184"/>
    </location>
</feature>
<feature type="strand" evidence="4">
    <location>
        <begin position="188"/>
        <end position="190"/>
    </location>
</feature>
<feature type="strand" evidence="7">
    <location>
        <begin position="197"/>
        <end position="200"/>
    </location>
</feature>
<feature type="helix" evidence="7">
    <location>
        <begin position="201"/>
        <end position="211"/>
    </location>
</feature>
<feature type="strand" evidence="7">
    <location>
        <begin position="215"/>
        <end position="220"/>
    </location>
</feature>
<feature type="helix" evidence="7">
    <location>
        <begin position="221"/>
        <end position="225"/>
    </location>
</feature>
<feature type="turn" evidence="7">
    <location>
        <begin position="226"/>
        <end position="228"/>
    </location>
</feature>
<feature type="strand" evidence="7">
    <location>
        <begin position="233"/>
        <end position="235"/>
    </location>
</feature>
<feature type="helix" evidence="7">
    <location>
        <begin position="246"/>
        <end position="252"/>
    </location>
</feature>
<feature type="turn" evidence="7">
    <location>
        <begin position="253"/>
        <end position="255"/>
    </location>
</feature>
<feature type="turn" evidence="7">
    <location>
        <begin position="258"/>
        <end position="260"/>
    </location>
</feature>
<feature type="strand" evidence="8">
    <location>
        <begin position="271"/>
        <end position="273"/>
    </location>
</feature>
<feature type="strand" evidence="7">
    <location>
        <begin position="276"/>
        <end position="288"/>
    </location>
</feature>
<feature type="helix" evidence="7">
    <location>
        <begin position="292"/>
        <end position="308"/>
    </location>
</feature>
<feature type="helix" evidence="7">
    <location>
        <begin position="310"/>
        <end position="315"/>
    </location>
</feature>
<feature type="helix" evidence="7">
    <location>
        <begin position="323"/>
        <end position="336"/>
    </location>
</feature>
<protein>
    <recommendedName>
        <fullName>Phosphate-binding protein PstS</fullName>
        <shortName>PBP</shortName>
    </recommendedName>
</protein>
<dbReference type="EMBL" id="K01992">
    <property type="protein sequence ID" value="AAA24378.1"/>
    <property type="molecule type" value="Genomic_DNA"/>
</dbReference>
<dbReference type="EMBL" id="L10328">
    <property type="protein sequence ID" value="AAA62079.1"/>
    <property type="molecule type" value="Genomic_DNA"/>
</dbReference>
<dbReference type="EMBL" id="U00096">
    <property type="protein sequence ID" value="AAC76751.1"/>
    <property type="molecule type" value="Genomic_DNA"/>
</dbReference>
<dbReference type="EMBL" id="AP009048">
    <property type="protein sequence ID" value="BAE77560.1"/>
    <property type="molecule type" value="Genomic_DNA"/>
</dbReference>
<dbReference type="PIR" id="A30277">
    <property type="entry name" value="BYECPR"/>
</dbReference>
<dbReference type="RefSeq" id="NP_418184.1">
    <property type="nucleotide sequence ID" value="NC_000913.3"/>
</dbReference>
<dbReference type="RefSeq" id="WP_000867146.1">
    <property type="nucleotide sequence ID" value="NZ_STEB01000015.1"/>
</dbReference>
<dbReference type="PDB" id="1A40">
    <property type="method" value="X-ray"/>
    <property type="resolution" value="1.70 A"/>
    <property type="chains" value="A=26-346"/>
</dbReference>
<dbReference type="PDB" id="1A54">
    <property type="method" value="X-ray"/>
    <property type="resolution" value="1.60 A"/>
    <property type="chains" value="A=26-346"/>
</dbReference>
<dbReference type="PDB" id="1A55">
    <property type="method" value="X-ray"/>
    <property type="resolution" value="2.40 A"/>
    <property type="chains" value="A=26-346"/>
</dbReference>
<dbReference type="PDB" id="1IXG">
    <property type="method" value="X-ray"/>
    <property type="resolution" value="1.05 A"/>
    <property type="chains" value="A=26-346"/>
</dbReference>
<dbReference type="PDB" id="1IXH">
    <property type="method" value="X-ray"/>
    <property type="resolution" value="0.98 A"/>
    <property type="chains" value="A=26-346"/>
</dbReference>
<dbReference type="PDB" id="1IXI">
    <property type="method" value="X-ray"/>
    <property type="resolution" value="1.89 A"/>
    <property type="chains" value="A=26-346"/>
</dbReference>
<dbReference type="PDB" id="1OIB">
    <property type="method" value="X-ray"/>
    <property type="resolution" value="2.40 A"/>
    <property type="chains" value="A/B=26-346"/>
</dbReference>
<dbReference type="PDB" id="1PBP">
    <property type="method" value="X-ray"/>
    <property type="resolution" value="1.90 A"/>
    <property type="chains" value="A=26-346"/>
</dbReference>
<dbReference type="PDB" id="1QUI">
    <property type="method" value="X-ray"/>
    <property type="resolution" value="1.90 A"/>
    <property type="chains" value="A=26-346"/>
</dbReference>
<dbReference type="PDB" id="1QUJ">
    <property type="method" value="X-ray"/>
    <property type="resolution" value="1.90 A"/>
    <property type="chains" value="A=26-346"/>
</dbReference>
<dbReference type="PDB" id="1QUK">
    <property type="method" value="X-ray"/>
    <property type="resolution" value="1.70 A"/>
    <property type="chains" value="A=26-346"/>
</dbReference>
<dbReference type="PDB" id="1QUL">
    <property type="method" value="X-ray"/>
    <property type="resolution" value="1.70 A"/>
    <property type="chains" value="A=26-346"/>
</dbReference>
<dbReference type="PDB" id="2ABH">
    <property type="method" value="X-ray"/>
    <property type="resolution" value="1.70 A"/>
    <property type="chains" value="A=26-346"/>
</dbReference>
<dbReference type="PDBsum" id="1A40"/>
<dbReference type="PDBsum" id="1A54"/>
<dbReference type="PDBsum" id="1A55"/>
<dbReference type="PDBsum" id="1IXG"/>
<dbReference type="PDBsum" id="1IXH"/>
<dbReference type="PDBsum" id="1IXI"/>
<dbReference type="PDBsum" id="1OIB"/>
<dbReference type="PDBsum" id="1PBP"/>
<dbReference type="PDBsum" id="1QUI"/>
<dbReference type="PDBsum" id="1QUJ"/>
<dbReference type="PDBsum" id="1QUK"/>
<dbReference type="PDBsum" id="1QUL"/>
<dbReference type="PDBsum" id="2ABH"/>
<dbReference type="SMR" id="P0AG82"/>
<dbReference type="BioGRID" id="4262139">
    <property type="interactions" value="97"/>
</dbReference>
<dbReference type="ComplexPortal" id="CPX-4381">
    <property type="entry name" value="Phosphate ABC transporter complex"/>
</dbReference>
<dbReference type="DIP" id="DIP-48241N"/>
<dbReference type="FunCoup" id="P0AG82">
    <property type="interactions" value="511"/>
</dbReference>
<dbReference type="IntAct" id="P0AG82">
    <property type="interactions" value="2"/>
</dbReference>
<dbReference type="STRING" id="511145.b3728"/>
<dbReference type="DrugBank" id="DB02831">
    <property type="generic name" value="Dihydrogenphosphate"/>
</dbReference>
<dbReference type="DrugBank" id="DB02799">
    <property type="generic name" value="N-[2-(1-maleimidyl)ethyl]-7-diethylaminocoumarin-3-carboxamide"/>
</dbReference>
<dbReference type="TCDB" id="3.A.1.7.1">
    <property type="family name" value="the atp-binding cassette (abc) superfamily"/>
</dbReference>
<dbReference type="jPOST" id="P0AG82"/>
<dbReference type="PaxDb" id="511145-b3728"/>
<dbReference type="EnsemblBacteria" id="AAC76751">
    <property type="protein sequence ID" value="AAC76751"/>
    <property type="gene ID" value="b3728"/>
</dbReference>
<dbReference type="GeneID" id="75205442"/>
<dbReference type="GeneID" id="948237"/>
<dbReference type="KEGG" id="ecj:JW3706"/>
<dbReference type="KEGG" id="eco:b3728"/>
<dbReference type="KEGG" id="ecoc:C3026_20205"/>
<dbReference type="PATRIC" id="fig|1411691.4.peg.2972"/>
<dbReference type="EchoBASE" id="EB0727"/>
<dbReference type="eggNOG" id="COG0226">
    <property type="taxonomic scope" value="Bacteria"/>
</dbReference>
<dbReference type="HOGENOM" id="CLU_034528_1_0_6"/>
<dbReference type="InParanoid" id="P0AG82"/>
<dbReference type="OMA" id="FPYPVYA"/>
<dbReference type="OrthoDB" id="9801510at2"/>
<dbReference type="PhylomeDB" id="P0AG82"/>
<dbReference type="BioCyc" id="EcoCyc:PSTS-MONOMER"/>
<dbReference type="BioCyc" id="MetaCyc:PSTS-MONOMER"/>
<dbReference type="EvolutionaryTrace" id="P0AG82"/>
<dbReference type="PHI-base" id="PHI:8082"/>
<dbReference type="PRO" id="PR:P0AG82"/>
<dbReference type="Proteomes" id="UP000000625">
    <property type="component" value="Chromosome"/>
</dbReference>
<dbReference type="GO" id="GO:0055052">
    <property type="term" value="C:ATP-binding cassette (ABC) transporter complex, substrate-binding subunit-containing"/>
    <property type="evidence" value="ECO:0000303"/>
    <property type="project" value="ComplexPortal"/>
</dbReference>
<dbReference type="GO" id="GO:0016020">
    <property type="term" value="C:membrane"/>
    <property type="evidence" value="ECO:0000303"/>
    <property type="project" value="ComplexPortal"/>
</dbReference>
<dbReference type="GO" id="GO:0030288">
    <property type="term" value="C:outer membrane-bounded periplasmic space"/>
    <property type="evidence" value="ECO:0000314"/>
    <property type="project" value="EcoCyc"/>
</dbReference>
<dbReference type="GO" id="GO:0042301">
    <property type="term" value="F:phosphate ion binding"/>
    <property type="evidence" value="ECO:0000314"/>
    <property type="project" value="EcoCyc"/>
</dbReference>
<dbReference type="GO" id="GO:0006974">
    <property type="term" value="P:DNA damage response"/>
    <property type="evidence" value="ECO:0000270"/>
    <property type="project" value="EcoliWiki"/>
</dbReference>
<dbReference type="GO" id="GO:0035435">
    <property type="term" value="P:phosphate ion transmembrane transport"/>
    <property type="evidence" value="ECO:0000303"/>
    <property type="project" value="ComplexPortal"/>
</dbReference>
<dbReference type="GO" id="GO:0006817">
    <property type="term" value="P:phosphate ion transport"/>
    <property type="evidence" value="ECO:0000314"/>
    <property type="project" value="EcoCyc"/>
</dbReference>
<dbReference type="GO" id="GO:0009314">
    <property type="term" value="P:response to radiation"/>
    <property type="evidence" value="ECO:0000315"/>
    <property type="project" value="EcoCyc"/>
</dbReference>
<dbReference type="CDD" id="cd01006">
    <property type="entry name" value="PBP2_phosphate_binding"/>
    <property type="match status" value="1"/>
</dbReference>
<dbReference type="Gene3D" id="3.40.190.10">
    <property type="entry name" value="Periplasmic binding protein-like II"/>
    <property type="match status" value="2"/>
</dbReference>
<dbReference type="InterPro" id="IPR005673">
    <property type="entry name" value="ABC_phos-bd_PstS"/>
</dbReference>
<dbReference type="InterPro" id="IPR024370">
    <property type="entry name" value="PBP_domain"/>
</dbReference>
<dbReference type="InterPro" id="IPR050962">
    <property type="entry name" value="Phosphate-bind_PstS"/>
</dbReference>
<dbReference type="NCBIfam" id="TIGR00975">
    <property type="entry name" value="3a0107s03"/>
    <property type="match status" value="1"/>
</dbReference>
<dbReference type="NCBIfam" id="NF008171">
    <property type="entry name" value="PRK10918.1"/>
    <property type="match status" value="1"/>
</dbReference>
<dbReference type="PANTHER" id="PTHR42996">
    <property type="entry name" value="PHOSPHATE-BINDING PROTEIN PSTS"/>
    <property type="match status" value="1"/>
</dbReference>
<dbReference type="PANTHER" id="PTHR42996:SF1">
    <property type="entry name" value="PHOSPHATE-BINDING PROTEIN PSTS"/>
    <property type="match status" value="1"/>
</dbReference>
<dbReference type="Pfam" id="PF12849">
    <property type="entry name" value="PBP_like_2"/>
    <property type="match status" value="1"/>
</dbReference>
<dbReference type="PIRSF" id="PIRSF002756">
    <property type="entry name" value="PstS"/>
    <property type="match status" value="1"/>
</dbReference>
<dbReference type="SUPFAM" id="SSF53850">
    <property type="entry name" value="Periplasmic binding protein-like II"/>
    <property type="match status" value="1"/>
</dbReference>
<proteinExistence type="evidence at protein level"/>
<name>PSTS_ECOLI</name>
<comment type="function">
    <text>Part of the ABC transporter complex PstSACB involved in phosphate import.</text>
</comment>
<comment type="subunit">
    <text evidence="3">The complex is composed of two ATP-binding proteins (PstB), two transmembrane proteins (PstC and PstA) and a solute-binding protein (PstS).</text>
</comment>
<comment type="subcellular location">
    <subcellularLocation>
        <location>Periplasm</location>
    </subcellularLocation>
</comment>
<comment type="induction">
    <text>By phosphate deprivation. Positively regulated by PhoB and negatively regulated by PhoR.</text>
</comment>
<comment type="similarity">
    <text evidence="3">Belongs to the PstS family.</text>
</comment>